<feature type="chain" id="PRO_0000456765" description="tRNA-uridine aminocarboxypropyltransferase 2">
    <location>
        <begin position="1"/>
        <end position="251"/>
    </location>
</feature>
<feature type="short sequence motif" description="DXTW" evidence="1">
    <location>
        <begin position="131"/>
        <end position="134"/>
    </location>
</feature>
<feature type="binding site" evidence="1">
    <location>
        <position position="23"/>
    </location>
    <ligand>
        <name>Zn(2+)</name>
        <dbReference type="ChEBI" id="CHEBI:29105"/>
    </ligand>
</feature>
<feature type="binding site" evidence="1">
    <location>
        <position position="26"/>
    </location>
    <ligand>
        <name>Zn(2+)</name>
        <dbReference type="ChEBI" id="CHEBI:29105"/>
    </ligand>
</feature>
<feature type="binding site" evidence="1">
    <location>
        <position position="33"/>
    </location>
    <ligand>
        <name>Zn(2+)</name>
        <dbReference type="ChEBI" id="CHEBI:29105"/>
    </ligand>
</feature>
<feature type="binding site" evidence="1">
    <location>
        <position position="35"/>
    </location>
    <ligand>
        <name>Zn(2+)</name>
        <dbReference type="ChEBI" id="CHEBI:29105"/>
    </ligand>
</feature>
<protein>
    <recommendedName>
        <fullName evidence="5">tRNA-uridine aminocarboxypropyltransferase 2</fullName>
        <ecNumber evidence="2">2.5.1.25</ecNumber>
    </recommendedName>
    <alternativeName>
        <fullName evidence="3">DTW domain-containing protein 2</fullName>
    </alternativeName>
</protein>
<organism evidence="8">
    <name type="scientific">Drosophila melanogaster</name>
    <name type="common">Fruit fly</name>
    <dbReference type="NCBI Taxonomy" id="7227"/>
    <lineage>
        <taxon>Eukaryota</taxon>
        <taxon>Metazoa</taxon>
        <taxon>Ecdysozoa</taxon>
        <taxon>Arthropoda</taxon>
        <taxon>Hexapoda</taxon>
        <taxon>Insecta</taxon>
        <taxon>Pterygota</taxon>
        <taxon>Neoptera</taxon>
        <taxon>Endopterygota</taxon>
        <taxon>Diptera</taxon>
        <taxon>Brachycera</taxon>
        <taxon>Muscomorpha</taxon>
        <taxon>Ephydroidea</taxon>
        <taxon>Drosophilidae</taxon>
        <taxon>Drosophila</taxon>
        <taxon>Sophophora</taxon>
    </lineage>
</organism>
<name>DTWD2_DROME</name>
<accession>Q9VI85</accession>
<sequence>MEDDAWLDLVGISADPPNRRNKCEKCKRPVVVCWCPALPHPPEAVSSQIVILQHPAEEKRSLRTALMLQLGLEPGKCVVYKGKRFPNHRNHADLQRILDSPQTLLLYPSRDSVPLEEVDHSAGPYTLVLIDGTWPQAKAIYASSPALHRLRQVKLIAVGISDYIIRTQPTEGCLSTLETAAQCLAVLESRPELRQTLVRPLHTLCKYQLDNGAVEHQSKEFLLKNNQYPKPIGKRLSRLLRNTACDGNEET</sequence>
<reference evidence="8" key="1">
    <citation type="journal article" date="2000" name="Science">
        <title>The genome sequence of Drosophila melanogaster.</title>
        <authorList>
            <person name="Adams M.D."/>
            <person name="Celniker S.E."/>
            <person name="Holt R.A."/>
            <person name="Evans C.A."/>
            <person name="Gocayne J.D."/>
            <person name="Amanatides P.G."/>
            <person name="Scherer S.E."/>
            <person name="Li P.W."/>
            <person name="Hoskins R.A."/>
            <person name="Galle R.F."/>
            <person name="George R.A."/>
            <person name="Lewis S.E."/>
            <person name="Richards S."/>
            <person name="Ashburner M."/>
            <person name="Henderson S.N."/>
            <person name="Sutton G.G."/>
            <person name="Wortman J.R."/>
            <person name="Yandell M.D."/>
            <person name="Zhang Q."/>
            <person name="Chen L.X."/>
            <person name="Brandon R.C."/>
            <person name="Rogers Y.-H.C."/>
            <person name="Blazej R.G."/>
            <person name="Champe M."/>
            <person name="Pfeiffer B.D."/>
            <person name="Wan K.H."/>
            <person name="Doyle C."/>
            <person name="Baxter E.G."/>
            <person name="Helt G."/>
            <person name="Nelson C.R."/>
            <person name="Miklos G.L.G."/>
            <person name="Abril J.F."/>
            <person name="Agbayani A."/>
            <person name="An H.-J."/>
            <person name="Andrews-Pfannkoch C."/>
            <person name="Baldwin D."/>
            <person name="Ballew R.M."/>
            <person name="Basu A."/>
            <person name="Baxendale J."/>
            <person name="Bayraktaroglu L."/>
            <person name="Beasley E.M."/>
            <person name="Beeson K.Y."/>
            <person name="Benos P.V."/>
            <person name="Berman B.P."/>
            <person name="Bhandari D."/>
            <person name="Bolshakov S."/>
            <person name="Borkova D."/>
            <person name="Botchan M.R."/>
            <person name="Bouck J."/>
            <person name="Brokstein P."/>
            <person name="Brottier P."/>
            <person name="Burtis K.C."/>
            <person name="Busam D.A."/>
            <person name="Butler H."/>
            <person name="Cadieu E."/>
            <person name="Center A."/>
            <person name="Chandra I."/>
            <person name="Cherry J.M."/>
            <person name="Cawley S."/>
            <person name="Dahlke C."/>
            <person name="Davenport L.B."/>
            <person name="Davies P."/>
            <person name="de Pablos B."/>
            <person name="Delcher A."/>
            <person name="Deng Z."/>
            <person name="Mays A.D."/>
            <person name="Dew I."/>
            <person name="Dietz S.M."/>
            <person name="Dodson K."/>
            <person name="Doup L.E."/>
            <person name="Downes M."/>
            <person name="Dugan-Rocha S."/>
            <person name="Dunkov B.C."/>
            <person name="Dunn P."/>
            <person name="Durbin K.J."/>
            <person name="Evangelista C.C."/>
            <person name="Ferraz C."/>
            <person name="Ferriera S."/>
            <person name="Fleischmann W."/>
            <person name="Fosler C."/>
            <person name="Gabrielian A.E."/>
            <person name="Garg N.S."/>
            <person name="Gelbart W.M."/>
            <person name="Glasser K."/>
            <person name="Glodek A."/>
            <person name="Gong F."/>
            <person name="Gorrell J.H."/>
            <person name="Gu Z."/>
            <person name="Guan P."/>
            <person name="Harris M."/>
            <person name="Harris N.L."/>
            <person name="Harvey D.A."/>
            <person name="Heiman T.J."/>
            <person name="Hernandez J.R."/>
            <person name="Houck J."/>
            <person name="Hostin D."/>
            <person name="Houston K.A."/>
            <person name="Howland T.J."/>
            <person name="Wei M.-H."/>
            <person name="Ibegwam C."/>
            <person name="Jalali M."/>
            <person name="Kalush F."/>
            <person name="Karpen G.H."/>
            <person name="Ke Z."/>
            <person name="Kennison J.A."/>
            <person name="Ketchum K.A."/>
            <person name="Kimmel B.E."/>
            <person name="Kodira C.D."/>
            <person name="Kraft C.L."/>
            <person name="Kravitz S."/>
            <person name="Kulp D."/>
            <person name="Lai Z."/>
            <person name="Lasko P."/>
            <person name="Lei Y."/>
            <person name="Levitsky A.A."/>
            <person name="Li J.H."/>
            <person name="Li Z."/>
            <person name="Liang Y."/>
            <person name="Lin X."/>
            <person name="Liu X."/>
            <person name="Mattei B."/>
            <person name="McIntosh T.C."/>
            <person name="McLeod M.P."/>
            <person name="McPherson D."/>
            <person name="Merkulov G."/>
            <person name="Milshina N.V."/>
            <person name="Mobarry C."/>
            <person name="Morris J."/>
            <person name="Moshrefi A."/>
            <person name="Mount S.M."/>
            <person name="Moy M."/>
            <person name="Murphy B."/>
            <person name="Murphy L."/>
            <person name="Muzny D.M."/>
            <person name="Nelson D.L."/>
            <person name="Nelson D.R."/>
            <person name="Nelson K.A."/>
            <person name="Nixon K."/>
            <person name="Nusskern D.R."/>
            <person name="Pacleb J.M."/>
            <person name="Palazzolo M."/>
            <person name="Pittman G.S."/>
            <person name="Pan S."/>
            <person name="Pollard J."/>
            <person name="Puri V."/>
            <person name="Reese M.G."/>
            <person name="Reinert K."/>
            <person name="Remington K."/>
            <person name="Saunders R.D.C."/>
            <person name="Scheeler F."/>
            <person name="Shen H."/>
            <person name="Shue B.C."/>
            <person name="Siden-Kiamos I."/>
            <person name="Simpson M."/>
            <person name="Skupski M.P."/>
            <person name="Smith T.J."/>
            <person name="Spier E."/>
            <person name="Spradling A.C."/>
            <person name="Stapleton M."/>
            <person name="Strong R."/>
            <person name="Sun E."/>
            <person name="Svirskas R."/>
            <person name="Tector C."/>
            <person name="Turner R."/>
            <person name="Venter E."/>
            <person name="Wang A.H."/>
            <person name="Wang X."/>
            <person name="Wang Z.-Y."/>
            <person name="Wassarman D.A."/>
            <person name="Weinstock G.M."/>
            <person name="Weissenbach J."/>
            <person name="Williams S.M."/>
            <person name="Woodage T."/>
            <person name="Worley K.C."/>
            <person name="Wu D."/>
            <person name="Yang S."/>
            <person name="Yao Q.A."/>
            <person name="Ye J."/>
            <person name="Yeh R.-F."/>
            <person name="Zaveri J.S."/>
            <person name="Zhan M."/>
            <person name="Zhang G."/>
            <person name="Zhao Q."/>
            <person name="Zheng L."/>
            <person name="Zheng X.H."/>
            <person name="Zhong F.N."/>
            <person name="Zhong W."/>
            <person name="Zhou X."/>
            <person name="Zhu S.C."/>
            <person name="Zhu X."/>
            <person name="Smith H.O."/>
            <person name="Gibbs R.A."/>
            <person name="Myers E.W."/>
            <person name="Rubin G.M."/>
            <person name="Venter J.C."/>
        </authorList>
    </citation>
    <scope>NUCLEOTIDE SEQUENCE [LARGE SCALE GENOMIC DNA]</scope>
    <source>
        <strain evidence="8">Berkeley</strain>
    </source>
</reference>
<reference evidence="8" key="2">
    <citation type="journal article" date="2002" name="Genome Biol.">
        <title>Annotation of the Drosophila melanogaster euchromatic genome: a systematic review.</title>
        <authorList>
            <person name="Misra S."/>
            <person name="Crosby M.A."/>
            <person name="Mungall C.J."/>
            <person name="Matthews B.B."/>
            <person name="Campbell K.S."/>
            <person name="Hradecky P."/>
            <person name="Huang Y."/>
            <person name="Kaminker J.S."/>
            <person name="Millburn G.H."/>
            <person name="Prochnik S.E."/>
            <person name="Smith C.D."/>
            <person name="Tupy J.L."/>
            <person name="Whitfield E.J."/>
            <person name="Bayraktaroglu L."/>
            <person name="Berman B.P."/>
            <person name="Bettencourt B.R."/>
            <person name="Celniker S.E."/>
            <person name="de Grey A.D.N.J."/>
            <person name="Drysdale R.A."/>
            <person name="Harris N.L."/>
            <person name="Richter J."/>
            <person name="Russo S."/>
            <person name="Schroeder A.J."/>
            <person name="Shu S.Q."/>
            <person name="Stapleton M."/>
            <person name="Yamada C."/>
            <person name="Ashburner M."/>
            <person name="Gelbart W.M."/>
            <person name="Rubin G.M."/>
            <person name="Lewis S.E."/>
        </authorList>
    </citation>
    <scope>GENOME REANNOTATION</scope>
    <source>
        <strain evidence="8">Berkeley</strain>
    </source>
</reference>
<reference evidence="6" key="3">
    <citation type="journal article" date="2002" name="Genome Biol.">
        <title>A Drosophila full-length cDNA resource.</title>
        <authorList>
            <person name="Stapleton M."/>
            <person name="Carlson J.W."/>
            <person name="Brokstein P."/>
            <person name="Yu C."/>
            <person name="Champe M."/>
            <person name="George R.A."/>
            <person name="Guarin H."/>
            <person name="Kronmiller B."/>
            <person name="Pacleb J.M."/>
            <person name="Park S."/>
            <person name="Wan K.H."/>
            <person name="Rubin G.M."/>
            <person name="Celniker S.E."/>
        </authorList>
    </citation>
    <scope>NUCLEOTIDE SEQUENCE [LARGE SCALE MRNA]</scope>
    <source>
        <strain evidence="6">Berkeley</strain>
        <tissue evidence="6">Embryo</tissue>
    </source>
</reference>
<reference evidence="4" key="4">
    <citation type="journal article" date="2020" name="PLoS ONE">
        <title>Identification of the enzymes responsible for m2,2G and acp3U formation on cytosolic tRNA from insects and plants.</title>
        <authorList>
            <person name="Funk H.M."/>
            <person name="Zhao R."/>
            <person name="Thomas M."/>
            <person name="Spigelmyer S.M."/>
            <person name="Sebree N.J."/>
            <person name="Bales R.O."/>
            <person name="Burchett J.B."/>
            <person name="Mamaril J.B."/>
            <person name="Limbach P.A."/>
            <person name="Guy M.P."/>
        </authorList>
    </citation>
    <scope>FUNCTION</scope>
    <scope>CATALYTIC ACTIVITY</scope>
</reference>
<proteinExistence type="evidence at protein level"/>
<comment type="function">
    <text evidence="2">Catalyzes the formation of 3-(3-amino-3-carboxypropyl)uridine (acp3U) at position 20a in the D-loop of several cytoplasmic tRNAs (acp3U(20a)).</text>
</comment>
<comment type="catalytic activity">
    <reaction evidence="2">
        <text>a uridine in tRNA + S-adenosyl-L-methionine = a 3-[(3S)-3-amino-3-carboxypropyl]uridine in tRNA + S-methyl-5'-thioadenosine + H(+)</text>
        <dbReference type="Rhea" id="RHEA:62432"/>
        <dbReference type="Rhea" id="RHEA-COMP:13339"/>
        <dbReference type="Rhea" id="RHEA-COMP:16092"/>
        <dbReference type="ChEBI" id="CHEBI:15378"/>
        <dbReference type="ChEBI" id="CHEBI:17509"/>
        <dbReference type="ChEBI" id="CHEBI:59789"/>
        <dbReference type="ChEBI" id="CHEBI:65315"/>
        <dbReference type="ChEBI" id="CHEBI:82930"/>
        <dbReference type="EC" id="2.5.1.25"/>
    </reaction>
</comment>
<comment type="domain">
    <text evidence="1">Contains 1 DXTW motif.</text>
</comment>
<comment type="similarity">
    <text evidence="4">Belongs to the TDD superfamily. DTWD2 family.</text>
</comment>
<evidence type="ECO:0000250" key="1">
    <source>
        <dbReference type="UniProtKB" id="Q47319"/>
    </source>
</evidence>
<evidence type="ECO:0000269" key="2">
    <source>
    </source>
</evidence>
<evidence type="ECO:0000303" key="3">
    <source>
    </source>
</evidence>
<evidence type="ECO:0000305" key="4"/>
<evidence type="ECO:0000305" key="5">
    <source>
    </source>
</evidence>
<evidence type="ECO:0000312" key="6">
    <source>
        <dbReference type="EMBL" id="AAL48905.1"/>
    </source>
</evidence>
<evidence type="ECO:0000312" key="7">
    <source>
        <dbReference type="FlyBase" id="FBgn0037492"/>
    </source>
</evidence>
<evidence type="ECO:0000312" key="8">
    <source>
        <dbReference type="Proteomes" id="UP000000803"/>
    </source>
</evidence>
<dbReference type="EC" id="2.5.1.25" evidence="2"/>
<dbReference type="EMBL" id="AE014297">
    <property type="protein sequence ID" value="AAF54040.1"/>
    <property type="molecule type" value="Genomic_DNA"/>
</dbReference>
<dbReference type="EMBL" id="AY071283">
    <property type="protein sequence ID" value="AAL48905.1"/>
    <property type="molecule type" value="mRNA"/>
</dbReference>
<dbReference type="RefSeq" id="NP_649713.1">
    <property type="nucleotide sequence ID" value="NM_141456.4"/>
</dbReference>
<dbReference type="FunCoup" id="Q9VI85">
    <property type="interactions" value="509"/>
</dbReference>
<dbReference type="STRING" id="7227.FBpp0081096"/>
<dbReference type="PaxDb" id="7227-FBpp0081096"/>
<dbReference type="DNASU" id="40873"/>
<dbReference type="EnsemblMetazoa" id="FBtr0081577">
    <property type="protein sequence ID" value="FBpp0081096"/>
    <property type="gene ID" value="FBgn0037492"/>
</dbReference>
<dbReference type="GeneID" id="40873"/>
<dbReference type="KEGG" id="dme:Dmel_CG10050"/>
<dbReference type="UCSC" id="CG10050-RA">
    <property type="organism name" value="d. melanogaster"/>
</dbReference>
<dbReference type="AGR" id="FB:FBgn0037492"/>
<dbReference type="CTD" id="285605"/>
<dbReference type="FlyBase" id="FBgn0037492">
    <property type="gene designation" value="Dtwd2"/>
</dbReference>
<dbReference type="VEuPathDB" id="VectorBase:FBgn0037492"/>
<dbReference type="eggNOG" id="KOG4382">
    <property type="taxonomic scope" value="Eukaryota"/>
</dbReference>
<dbReference type="GeneTree" id="ENSGT00390000006867"/>
<dbReference type="HOGENOM" id="CLU_066458_3_0_1"/>
<dbReference type="InParanoid" id="Q9VI85"/>
<dbReference type="OMA" id="GTWRKAF"/>
<dbReference type="OrthoDB" id="408541at2759"/>
<dbReference type="BioGRID-ORCS" id="40873">
    <property type="hits" value="0 hits in 1 CRISPR screen"/>
</dbReference>
<dbReference type="GenomeRNAi" id="40873"/>
<dbReference type="PRO" id="PR:Q9VI85"/>
<dbReference type="Proteomes" id="UP000000803">
    <property type="component" value="Chromosome 3R"/>
</dbReference>
<dbReference type="Bgee" id="FBgn0037492">
    <property type="expression patterns" value="Expressed in adult olfactory receptor neuron Ir75d in antenna and 26 other cell types or tissues"/>
</dbReference>
<dbReference type="ExpressionAtlas" id="Q9VI85">
    <property type="expression patterns" value="baseline and differential"/>
</dbReference>
<dbReference type="GO" id="GO:0005829">
    <property type="term" value="C:cytosol"/>
    <property type="evidence" value="ECO:0000305"/>
    <property type="project" value="FlyBase"/>
</dbReference>
<dbReference type="GO" id="GO:0046872">
    <property type="term" value="F:metal ion binding"/>
    <property type="evidence" value="ECO:0007669"/>
    <property type="project" value="UniProtKB-KW"/>
</dbReference>
<dbReference type="GO" id="GO:0016432">
    <property type="term" value="F:tRNA-uridine aminocarboxypropyltransferase activity"/>
    <property type="evidence" value="ECO:0000315"/>
    <property type="project" value="FlyBase"/>
</dbReference>
<dbReference type="GO" id="GO:0006400">
    <property type="term" value="P:tRNA modification"/>
    <property type="evidence" value="ECO:0000314"/>
    <property type="project" value="FlyBase"/>
</dbReference>
<dbReference type="InterPro" id="IPR005636">
    <property type="entry name" value="DTW"/>
</dbReference>
<dbReference type="InterPro" id="IPR039262">
    <property type="entry name" value="DTWD2/TAPT"/>
</dbReference>
<dbReference type="PANTHER" id="PTHR21392">
    <property type="entry name" value="TRNA-URIDINE AMINOCARBOXYPROPYLTRANSFERASE 2"/>
    <property type="match status" value="1"/>
</dbReference>
<dbReference type="PANTHER" id="PTHR21392:SF0">
    <property type="entry name" value="TRNA-URIDINE AMINOCARBOXYPROPYLTRANSFERASE 2"/>
    <property type="match status" value="1"/>
</dbReference>
<dbReference type="Pfam" id="PF03942">
    <property type="entry name" value="DTW"/>
    <property type="match status" value="1"/>
</dbReference>
<dbReference type="SMART" id="SM01144">
    <property type="entry name" value="DTW"/>
    <property type="match status" value="1"/>
</dbReference>
<gene>
    <name evidence="3 7" type="primary">Dtwd2</name>
    <name evidence="7" type="ORF">CG10050</name>
</gene>
<keyword id="KW-0479">Metal-binding</keyword>
<keyword id="KW-1185">Reference proteome</keyword>
<keyword id="KW-0949">S-adenosyl-L-methionine</keyword>
<keyword id="KW-0808">Transferase</keyword>
<keyword id="KW-0819">tRNA processing</keyword>
<keyword id="KW-0862">Zinc</keyword>